<protein>
    <recommendedName>
        <fullName>Proteasome subunit beta type-6-B like protein</fullName>
        <ecNumber>3.4.25.1</ecNumber>
    </recommendedName>
    <alternativeName>
        <fullName>Low molecular mass protein 2-delta-B</fullName>
    </alternativeName>
</protein>
<name>PB6LB_SALSA</name>
<accession>A7KII6</accession>
<comment type="function">
    <text evidence="1">The proteasome is a multicatalytic proteinase complex which is characterized by its ability to cleave peptides with Arg, Phe, Tyr, Leu, and Glu adjacent to the leaving group at neutral or slightly basic pH. The proteasome has an ATP-dependent proteolytic activity. This subunit is involved in antigen processing to generate class I binding peptides (By similarity).</text>
</comment>
<comment type="catalytic activity">
    <reaction>
        <text>Cleavage of peptide bonds with very broad specificity.</text>
        <dbReference type="EC" id="3.4.25.1"/>
    </reaction>
</comment>
<comment type="subunit">
    <text>The 26S proteasome consists of a 20S proteasome core and two 19S regulatory subunits. The 20S proteasome core is composed of 28 subunits that are arranged in four stacked rings, resulting in a barrel-shaped structure. The two end rings are each formed by seven alpha subunits, and the two central rings are each formed by seven beta subunits. The catalytic chamber with the active sites is on the inside of the barrel.</text>
</comment>
<comment type="subcellular location">
    <subcellularLocation>
        <location evidence="2">Cytoplasm</location>
    </subcellularLocation>
    <subcellularLocation>
        <location evidence="1">Nucleus</location>
    </subcellularLocation>
</comment>
<comment type="similarity">
    <text evidence="2">Belongs to the peptidase T1B family.</text>
</comment>
<organism>
    <name type="scientific">Salmo salar</name>
    <name type="common">Atlantic salmon</name>
    <dbReference type="NCBI Taxonomy" id="8030"/>
    <lineage>
        <taxon>Eukaryota</taxon>
        <taxon>Metazoa</taxon>
        <taxon>Chordata</taxon>
        <taxon>Craniata</taxon>
        <taxon>Vertebrata</taxon>
        <taxon>Euteleostomi</taxon>
        <taxon>Actinopterygii</taxon>
        <taxon>Neopterygii</taxon>
        <taxon>Teleostei</taxon>
        <taxon>Protacanthopterygii</taxon>
        <taxon>Salmoniformes</taxon>
        <taxon>Salmonidae</taxon>
        <taxon>Salmoninae</taxon>
        <taxon>Salmo</taxon>
    </lineage>
</organism>
<proteinExistence type="inferred from homology"/>
<sequence>MERHFMDSQIKGVSTGTTILAVTFNGGVIIGSDSRASIGGSYVSSKTINKLIQVHDRIFCCIAGSLADAQAVTKAAKFQISFHSIQMESPPLVKAAASVLKELCYNNKEELQAGFITAGWDRKKGPQVYTVALGGMLLSQPFTIGGSGSTYIYGYADAKYKPDMSKEECLQFATNALALAMGRDNVSGGVAHLVVITEEGVEHVVIPGDKLPKFHDE</sequence>
<reference key="1">
    <citation type="journal article" date="2007" name="BMC Genomics">
        <title>Genomic organization of duplicated major histocompatibility complex class I regions in Atlantic salmon (Salmo salar).</title>
        <authorList>
            <person name="Lukacs M.F."/>
            <person name="Harstad H."/>
            <person name="Grimholt U."/>
            <person name="Beetz-Sargent M."/>
            <person name="Cooper G.A."/>
            <person name="Reid L."/>
            <person name="Bakke H.G."/>
            <person name="Phillips R.B."/>
            <person name="Miller K.M."/>
            <person name="Davidson W.S."/>
            <person name="Koop B.F."/>
        </authorList>
    </citation>
    <scope>NUCLEOTIDE SEQUENCE [GENOMIC DNA]</scope>
</reference>
<dbReference type="EC" id="3.4.25.1"/>
<dbReference type="EMBL" id="EF427379">
    <property type="protein sequence ID" value="ABQ59652.1"/>
    <property type="molecule type" value="Genomic_DNA"/>
</dbReference>
<dbReference type="SMR" id="A7KII6"/>
<dbReference type="STRING" id="8030.ENSSSAP00000035269"/>
<dbReference type="MEROPS" id="T01.013"/>
<dbReference type="PaxDb" id="8030-ENSSSAP00000035269"/>
<dbReference type="Proteomes" id="UP000087266">
    <property type="component" value="Unplaced"/>
</dbReference>
<dbReference type="GO" id="GO:0005737">
    <property type="term" value="C:cytoplasm"/>
    <property type="evidence" value="ECO:0007669"/>
    <property type="project" value="UniProtKB-SubCell"/>
</dbReference>
<dbReference type="GO" id="GO:0005634">
    <property type="term" value="C:nucleus"/>
    <property type="evidence" value="ECO:0007669"/>
    <property type="project" value="UniProtKB-SubCell"/>
</dbReference>
<dbReference type="GO" id="GO:0019774">
    <property type="term" value="C:proteasome core complex, beta-subunit complex"/>
    <property type="evidence" value="ECO:0000250"/>
    <property type="project" value="UniProtKB"/>
</dbReference>
<dbReference type="GO" id="GO:0004298">
    <property type="term" value="F:threonine-type endopeptidase activity"/>
    <property type="evidence" value="ECO:0007669"/>
    <property type="project" value="UniProtKB-KW"/>
</dbReference>
<dbReference type="GO" id="GO:0002376">
    <property type="term" value="P:immune system process"/>
    <property type="evidence" value="ECO:0007669"/>
    <property type="project" value="UniProtKB-KW"/>
</dbReference>
<dbReference type="GO" id="GO:0051603">
    <property type="term" value="P:proteolysis involved in protein catabolic process"/>
    <property type="evidence" value="ECO:0007669"/>
    <property type="project" value="InterPro"/>
</dbReference>
<dbReference type="CDD" id="cd03762">
    <property type="entry name" value="proteasome_beta_type_6"/>
    <property type="match status" value="1"/>
</dbReference>
<dbReference type="FunFam" id="3.60.20.10:FF:000069">
    <property type="entry name" value="Proteasome subunit beta 12"/>
    <property type="match status" value="1"/>
</dbReference>
<dbReference type="Gene3D" id="3.60.20.10">
    <property type="entry name" value="Glutamine Phosphoribosylpyrophosphate, subunit 1, domain 1"/>
    <property type="match status" value="1"/>
</dbReference>
<dbReference type="InterPro" id="IPR029055">
    <property type="entry name" value="Ntn_hydrolases_N"/>
</dbReference>
<dbReference type="InterPro" id="IPR000243">
    <property type="entry name" value="Pept_T1A_subB"/>
</dbReference>
<dbReference type="InterPro" id="IPR016050">
    <property type="entry name" value="Proteasome_bsu_CS"/>
</dbReference>
<dbReference type="InterPro" id="IPR001353">
    <property type="entry name" value="Proteasome_sua/b"/>
</dbReference>
<dbReference type="InterPro" id="IPR023333">
    <property type="entry name" value="Proteasome_suB-type"/>
</dbReference>
<dbReference type="PANTHER" id="PTHR32194:SF0">
    <property type="entry name" value="ATP-DEPENDENT PROTEASE SUBUNIT HSLV"/>
    <property type="match status" value="1"/>
</dbReference>
<dbReference type="PANTHER" id="PTHR32194">
    <property type="entry name" value="METALLOPROTEASE TLDD"/>
    <property type="match status" value="1"/>
</dbReference>
<dbReference type="Pfam" id="PF00227">
    <property type="entry name" value="Proteasome"/>
    <property type="match status" value="1"/>
</dbReference>
<dbReference type="PRINTS" id="PR00141">
    <property type="entry name" value="PROTEASOME"/>
</dbReference>
<dbReference type="SUPFAM" id="SSF56235">
    <property type="entry name" value="N-terminal nucleophile aminohydrolases (Ntn hydrolases)"/>
    <property type="match status" value="1"/>
</dbReference>
<dbReference type="PROSITE" id="PS00854">
    <property type="entry name" value="PROTEASOME_BETA_1"/>
    <property type="match status" value="1"/>
</dbReference>
<dbReference type="PROSITE" id="PS51476">
    <property type="entry name" value="PROTEASOME_BETA_2"/>
    <property type="match status" value="1"/>
</dbReference>
<evidence type="ECO:0000250" key="1"/>
<evidence type="ECO:0000255" key="2">
    <source>
        <dbReference type="PROSITE-ProRule" id="PRU00809"/>
    </source>
</evidence>
<feature type="propeptide" id="PRO_0000341326" description="Removed in mature form" evidence="1">
    <location>
        <begin position="1"/>
        <end position="16"/>
    </location>
</feature>
<feature type="chain" id="PRO_0000341327" description="Proteasome subunit beta type-6-B like protein">
    <location>
        <begin position="17"/>
        <end position="217"/>
    </location>
</feature>
<feature type="active site" description="Nucleophile" evidence="1">
    <location>
        <position position="17"/>
    </location>
</feature>
<gene>
    <name type="primary">psmb6l-b</name>
    <name type="synonym">lmp2-delta-b</name>
</gene>
<keyword id="KW-0963">Cytoplasm</keyword>
<keyword id="KW-0378">Hydrolase</keyword>
<keyword id="KW-0391">Immunity</keyword>
<keyword id="KW-0539">Nucleus</keyword>
<keyword id="KW-0645">Protease</keyword>
<keyword id="KW-0647">Proteasome</keyword>
<keyword id="KW-1185">Reference proteome</keyword>
<keyword id="KW-0888">Threonine protease</keyword>
<keyword id="KW-0865">Zymogen</keyword>